<feature type="signal peptide">
    <location>
        <begin position="1"/>
        <end position="56"/>
    </location>
</feature>
<feature type="chain" id="PRO_0000005889" description="C4b-binding protein">
    <location>
        <begin position="57"/>
        <end position="469"/>
    </location>
</feature>
<feature type="domain" description="Sushi 1" evidence="2">
    <location>
        <begin position="57"/>
        <end position="117"/>
    </location>
</feature>
<feature type="domain" description="Sushi 2" evidence="2">
    <location>
        <begin position="118"/>
        <end position="178"/>
    </location>
</feature>
<feature type="domain" description="Sushi 3" evidence="2">
    <location>
        <begin position="179"/>
        <end position="242"/>
    </location>
</feature>
<feature type="domain" description="Sushi 4" evidence="2">
    <location>
        <begin position="243"/>
        <end position="301"/>
    </location>
</feature>
<feature type="domain" description="Sushi 5" evidence="2">
    <location>
        <begin position="302"/>
        <end position="357"/>
    </location>
</feature>
<feature type="domain" description="Sushi 6" evidence="2">
    <location>
        <begin position="358"/>
        <end position="415"/>
    </location>
</feature>
<feature type="glycosylation site" description="N-linked (GlcNAc...) asparagine" evidence="1">
    <location>
        <position position="74"/>
    </location>
</feature>
<feature type="glycosylation site" description="N-linked (GlcNAc...) asparagine" evidence="1">
    <location>
        <position position="227"/>
    </location>
</feature>
<feature type="glycosylation site" description="N-linked (GlcNAc...) asparagine" evidence="3">
    <location>
        <position position="275"/>
    </location>
</feature>
<feature type="glycosylation site" description="N-linked (GlcNAc...) asparagine" evidence="1">
    <location>
        <position position="292"/>
    </location>
</feature>
<feature type="glycosylation site" description="N-linked (GlcNAc...) asparagine" evidence="1">
    <location>
        <position position="366"/>
    </location>
</feature>
<feature type="glycosylation site" description="N-linked (GlcNAc...) asparagine" evidence="1">
    <location>
        <position position="381"/>
    </location>
</feature>
<feature type="glycosylation site" description="N-linked (GlcNAc...) asparagine" evidence="1">
    <location>
        <position position="428"/>
    </location>
</feature>
<feature type="disulfide bond" evidence="2">
    <location>
        <begin position="58"/>
        <end position="103"/>
    </location>
</feature>
<feature type="disulfide bond" evidence="2">
    <location>
        <begin position="88"/>
        <end position="115"/>
    </location>
</feature>
<feature type="disulfide bond" evidence="2">
    <location>
        <begin position="120"/>
        <end position="160"/>
    </location>
</feature>
<feature type="disulfide bond" evidence="2">
    <location>
        <begin position="146"/>
        <end position="176"/>
    </location>
</feature>
<feature type="disulfide bond" evidence="2">
    <location>
        <begin position="181"/>
        <end position="223"/>
    </location>
</feature>
<feature type="disulfide bond" evidence="2">
    <location>
        <begin position="209"/>
        <end position="240"/>
    </location>
</feature>
<feature type="disulfide bond" evidence="2">
    <location>
        <begin position="245"/>
        <end position="287"/>
    </location>
</feature>
<feature type="disulfide bond" evidence="2">
    <location>
        <begin position="273"/>
        <end position="299"/>
    </location>
</feature>
<feature type="disulfide bond" evidence="2">
    <location>
        <begin position="303"/>
        <end position="343"/>
    </location>
</feature>
<feature type="disulfide bond" evidence="2">
    <location>
        <begin position="329"/>
        <end position="355"/>
    </location>
</feature>
<feature type="disulfide bond" evidence="2">
    <location>
        <begin position="359"/>
        <end position="400"/>
    </location>
</feature>
<feature type="disulfide bond" evidence="2">
    <location>
        <begin position="386"/>
        <end position="413"/>
    </location>
</feature>
<name>C4BPA_MOUSE</name>
<keyword id="KW-0180">Complement pathway</keyword>
<keyword id="KW-1015">Disulfide bond</keyword>
<keyword id="KW-0325">Glycoprotein</keyword>
<keyword id="KW-0391">Immunity</keyword>
<keyword id="KW-0399">Innate immunity</keyword>
<keyword id="KW-1185">Reference proteome</keyword>
<keyword id="KW-0677">Repeat</keyword>
<keyword id="KW-0964">Secreted</keyword>
<keyword id="KW-0732">Signal</keyword>
<keyword id="KW-0768">Sushi</keyword>
<organism>
    <name type="scientific">Mus musculus</name>
    <name type="common">Mouse</name>
    <dbReference type="NCBI Taxonomy" id="10090"/>
    <lineage>
        <taxon>Eukaryota</taxon>
        <taxon>Metazoa</taxon>
        <taxon>Chordata</taxon>
        <taxon>Craniata</taxon>
        <taxon>Vertebrata</taxon>
        <taxon>Euteleostomi</taxon>
        <taxon>Mammalia</taxon>
        <taxon>Eutheria</taxon>
        <taxon>Euarchontoglires</taxon>
        <taxon>Glires</taxon>
        <taxon>Rodentia</taxon>
        <taxon>Myomorpha</taxon>
        <taxon>Muroidea</taxon>
        <taxon>Muridae</taxon>
        <taxon>Murinae</taxon>
        <taxon>Mus</taxon>
        <taxon>Mus</taxon>
    </lineage>
</organism>
<dbReference type="EMBL" id="M17122">
    <property type="protein sequence ID" value="AAA37312.1"/>
    <property type="status" value="ALT_INIT"/>
    <property type="molecule type" value="mRNA"/>
</dbReference>
<dbReference type="EMBL" id="AK149468">
    <property type="protein sequence ID" value="BAE28899.1"/>
    <property type="molecule type" value="mRNA"/>
</dbReference>
<dbReference type="EMBL" id="AK149477">
    <property type="protein sequence ID" value="BAE28904.1"/>
    <property type="molecule type" value="mRNA"/>
</dbReference>
<dbReference type="EMBL" id="CH466520">
    <property type="protein sequence ID" value="EDL39738.1"/>
    <property type="molecule type" value="Genomic_DNA"/>
</dbReference>
<dbReference type="EMBL" id="BC012257">
    <property type="protein sequence ID" value="AAH12257.1"/>
    <property type="molecule type" value="mRNA"/>
</dbReference>
<dbReference type="CCDS" id="CCDS35700.1"/>
<dbReference type="PIR" id="A27117">
    <property type="entry name" value="NBMSC4"/>
</dbReference>
<dbReference type="RefSeq" id="NP_031602.3">
    <property type="nucleotide sequence ID" value="NM_007576.3"/>
</dbReference>
<dbReference type="RefSeq" id="XP_011246208.1">
    <property type="nucleotide sequence ID" value="XM_011247906.2"/>
</dbReference>
<dbReference type="SMR" id="P08607"/>
<dbReference type="FunCoup" id="P08607">
    <property type="interactions" value="46"/>
</dbReference>
<dbReference type="IntAct" id="P08607">
    <property type="interactions" value="1"/>
</dbReference>
<dbReference type="STRING" id="10090.ENSMUSP00000027657"/>
<dbReference type="GlyConnect" id="814">
    <property type="glycosylation" value="1 N-Linked glycan (1 site)"/>
</dbReference>
<dbReference type="GlyCosmos" id="P08607">
    <property type="glycosylation" value="7 sites, 2 glycans"/>
</dbReference>
<dbReference type="GlyGen" id="P08607">
    <property type="glycosylation" value="7 sites, 4 N-linked glycans (3 sites)"/>
</dbReference>
<dbReference type="iPTMnet" id="P08607"/>
<dbReference type="PhosphoSitePlus" id="P08607"/>
<dbReference type="CPTAC" id="non-CPTAC-3318"/>
<dbReference type="PaxDb" id="10090-ENSMUSP00000027657"/>
<dbReference type="PeptideAtlas" id="P08607"/>
<dbReference type="Antibodypedia" id="694">
    <property type="antibodies" value="298 antibodies from 30 providers"/>
</dbReference>
<dbReference type="DNASU" id="12269"/>
<dbReference type="Ensembl" id="ENSMUST00000027657.14">
    <property type="protein sequence ID" value="ENSMUSP00000027657.8"/>
    <property type="gene ID" value="ENSMUSG00000026405.15"/>
</dbReference>
<dbReference type="GeneID" id="12269"/>
<dbReference type="KEGG" id="mmu:12269"/>
<dbReference type="UCSC" id="uc007cmc.1">
    <property type="organism name" value="mouse"/>
</dbReference>
<dbReference type="AGR" id="MGI:88229"/>
<dbReference type="CTD" id="12269"/>
<dbReference type="MGI" id="MGI:88229">
    <property type="gene designation" value="C4bp"/>
</dbReference>
<dbReference type="VEuPathDB" id="HostDB:ENSMUSG00000026405"/>
<dbReference type="eggNOG" id="ENOG502SHRK">
    <property type="taxonomic scope" value="Eukaryota"/>
</dbReference>
<dbReference type="GeneTree" id="ENSGT00940000154640"/>
<dbReference type="HOGENOM" id="CLU_020107_5_2_1"/>
<dbReference type="InParanoid" id="P08607"/>
<dbReference type="OMA" id="VLRYRCH"/>
<dbReference type="OrthoDB" id="8961654at2759"/>
<dbReference type="PhylomeDB" id="P08607"/>
<dbReference type="TreeFam" id="TF334137"/>
<dbReference type="BioGRID-ORCS" id="12269">
    <property type="hits" value="2 hits in 77 CRISPR screens"/>
</dbReference>
<dbReference type="PRO" id="PR:P08607"/>
<dbReference type="Proteomes" id="UP000000589">
    <property type="component" value="Chromosome 1"/>
</dbReference>
<dbReference type="RNAct" id="P08607">
    <property type="molecule type" value="protein"/>
</dbReference>
<dbReference type="Bgee" id="ENSMUSG00000026405">
    <property type="expression patterns" value="Expressed in left lobe of liver and 42 other cell types or tissues"/>
</dbReference>
<dbReference type="ExpressionAtlas" id="P08607">
    <property type="expression patterns" value="baseline and differential"/>
</dbReference>
<dbReference type="GO" id="GO:0005576">
    <property type="term" value="C:extracellular region"/>
    <property type="evidence" value="ECO:0007669"/>
    <property type="project" value="UniProtKB-SubCell"/>
</dbReference>
<dbReference type="GO" id="GO:0006958">
    <property type="term" value="P:complement activation, classical pathway"/>
    <property type="evidence" value="ECO:0007669"/>
    <property type="project" value="UniProtKB-KW"/>
</dbReference>
<dbReference type="GO" id="GO:0045087">
    <property type="term" value="P:innate immune response"/>
    <property type="evidence" value="ECO:0007669"/>
    <property type="project" value="UniProtKB-KW"/>
</dbReference>
<dbReference type="CDD" id="cd00033">
    <property type="entry name" value="CCP"/>
    <property type="match status" value="6"/>
</dbReference>
<dbReference type="FunFam" id="2.10.70.10:FF:000055">
    <property type="entry name" value="Complement decay-accelerating factor, GPI-anchored"/>
    <property type="match status" value="1"/>
</dbReference>
<dbReference type="FunFam" id="2.10.70.10:FF:000014">
    <property type="entry name" value="Membrane cofactor protein"/>
    <property type="match status" value="1"/>
</dbReference>
<dbReference type="Gene3D" id="1.20.5.3730">
    <property type="match status" value="1"/>
</dbReference>
<dbReference type="Gene3D" id="2.10.70.10">
    <property type="entry name" value="Complement Module, domain 1"/>
    <property type="match status" value="6"/>
</dbReference>
<dbReference type="InterPro" id="IPR040514">
    <property type="entry name" value="C4bp_oligo"/>
</dbReference>
<dbReference type="InterPro" id="IPR035976">
    <property type="entry name" value="Sushi/SCR/CCP_sf"/>
</dbReference>
<dbReference type="InterPro" id="IPR000436">
    <property type="entry name" value="Sushi_SCR_CCP_dom"/>
</dbReference>
<dbReference type="PANTHER" id="PTHR46393:SF7">
    <property type="entry name" value="COMPLEMENT C2"/>
    <property type="match status" value="1"/>
</dbReference>
<dbReference type="PANTHER" id="PTHR46393">
    <property type="entry name" value="SUSHI DOMAIN-CONTAINING PROTEIN"/>
    <property type="match status" value="1"/>
</dbReference>
<dbReference type="Pfam" id="PF18453">
    <property type="entry name" value="C4bp_oligo"/>
    <property type="match status" value="1"/>
</dbReference>
<dbReference type="Pfam" id="PF00084">
    <property type="entry name" value="Sushi"/>
    <property type="match status" value="6"/>
</dbReference>
<dbReference type="SMART" id="SM00032">
    <property type="entry name" value="CCP"/>
    <property type="match status" value="6"/>
</dbReference>
<dbReference type="SUPFAM" id="SSF57535">
    <property type="entry name" value="Complement control module/SCR domain"/>
    <property type="match status" value="6"/>
</dbReference>
<dbReference type="PROSITE" id="PS50923">
    <property type="entry name" value="SUSHI"/>
    <property type="match status" value="6"/>
</dbReference>
<proteinExistence type="evidence at protein level"/>
<comment type="function">
    <text>Controls the classical pathway of complement activation. It binds as a cofactor to C3b/C4b inactivator (C3bINA), which then hydrolyzes the complement fragment C4b. It also accelerates the degradation of the C4bC2a complex (C3 convertase) by dissociating the complement fragment C2a. Alpha chain binds C4b. It also interacts with serum amyloid P component.</text>
</comment>
<comment type="subunit">
    <text>Homoheptamer; not covalently linked. Mouse lacks the beta chain of C4BP.</text>
</comment>
<comment type="interaction">
    <interactant intactId="EBI-527325">
        <id>P08607</id>
    </interactant>
    <interactant intactId="EBI-527196">
        <id>Q13873</id>
        <label>BMPR2</label>
    </interactant>
    <organismsDiffer>true</organismsDiffer>
    <experiments>3</experiments>
</comment>
<comment type="subcellular location">
    <subcellularLocation>
        <location>Secreted</location>
    </subcellularLocation>
</comment>
<comment type="caution">
    <text evidence="4">It is uncertain whether Met-1 or Met-44 is the initiator.</text>
</comment>
<comment type="sequence caution" evidence="4">
    <conflict type="erroneous initiation">
        <sequence resource="EMBL-CDS" id="AAA37312"/>
    </conflict>
    <text>Truncated N-terminus.</text>
</comment>
<gene>
    <name type="primary">C4bpa</name>
    <name type="synonym">C4bp</name>
</gene>
<sequence length="469" mass="51524">MCAKQQQTLLPTRAAHGRLHRNRDAVAWPFSTLCRVSGPTLFQMTFTAALWVAVFGKCGPPPAIPNALPASDVNRTDFESHTTLKYECLPGYGRGISRMMVYCKPSGEWEISVSCAKKHCRNPGYLDNGYVNGETITFGSQIEFSCQEGFILVGSSTSSCEVRGKGVAWSNPFPECVIVKCGPPPDISNGKHSGTEDFYPYNHGISYTCDPGFRLVGSPFIGCTVVNKTVPVWSSSPPTCEKIICSQPNILHGVIVSGYKATYTHRDSVRLACLNGTVLRGRHVIECQGNGNWSSLPTCEFDCDLPPAIVNGYYTSMVYSKITLVTYECDKGYRLVGKAIISCSFSKWKGTAPQCKALCQKPEVGNGTLSDEKDQYVESENVTIQCDSGFAMLGSQSISCSESGTWYPEVPRCEQEASEDLKPALTGNKTMQYVPNSHDVKMALEIYKLTLEVELLQLQIQKEKHTEAH</sequence>
<evidence type="ECO:0000255" key="1"/>
<evidence type="ECO:0000255" key="2">
    <source>
        <dbReference type="PROSITE-ProRule" id="PRU00302"/>
    </source>
</evidence>
<evidence type="ECO:0000269" key="3">
    <source>
    </source>
</evidence>
<evidence type="ECO:0000305" key="4"/>
<protein>
    <recommendedName>
        <fullName>C4b-binding protein</fullName>
        <shortName>C4bp</shortName>
    </recommendedName>
</protein>
<accession>P08607</accession>
<accession>Q91X48</accession>
<reference key="1">
    <citation type="journal article" date="1987" name="Biochemistry">
        <title>cDNA structure of murine C4b-binding protein, a regulatory component of the serum complement system.</title>
        <authorList>
            <person name="Kristensen T."/>
            <person name="Ogata R.T."/>
            <person name="Chung L.P."/>
            <person name="Reid K.B.M."/>
            <person name="Tack B.F."/>
        </authorList>
    </citation>
    <scope>NUCLEOTIDE SEQUENCE [MRNA]</scope>
</reference>
<reference key="2">
    <citation type="journal article" date="2005" name="Science">
        <title>The transcriptional landscape of the mammalian genome.</title>
        <authorList>
            <person name="Carninci P."/>
            <person name="Kasukawa T."/>
            <person name="Katayama S."/>
            <person name="Gough J."/>
            <person name="Frith M.C."/>
            <person name="Maeda N."/>
            <person name="Oyama R."/>
            <person name="Ravasi T."/>
            <person name="Lenhard B."/>
            <person name="Wells C."/>
            <person name="Kodzius R."/>
            <person name="Shimokawa K."/>
            <person name="Bajic V.B."/>
            <person name="Brenner S.E."/>
            <person name="Batalov S."/>
            <person name="Forrest A.R."/>
            <person name="Zavolan M."/>
            <person name="Davis M.J."/>
            <person name="Wilming L.G."/>
            <person name="Aidinis V."/>
            <person name="Allen J.E."/>
            <person name="Ambesi-Impiombato A."/>
            <person name="Apweiler R."/>
            <person name="Aturaliya R.N."/>
            <person name="Bailey T.L."/>
            <person name="Bansal M."/>
            <person name="Baxter L."/>
            <person name="Beisel K.W."/>
            <person name="Bersano T."/>
            <person name="Bono H."/>
            <person name="Chalk A.M."/>
            <person name="Chiu K.P."/>
            <person name="Choudhary V."/>
            <person name="Christoffels A."/>
            <person name="Clutterbuck D.R."/>
            <person name="Crowe M.L."/>
            <person name="Dalla E."/>
            <person name="Dalrymple B.P."/>
            <person name="de Bono B."/>
            <person name="Della Gatta G."/>
            <person name="di Bernardo D."/>
            <person name="Down T."/>
            <person name="Engstrom P."/>
            <person name="Fagiolini M."/>
            <person name="Faulkner G."/>
            <person name="Fletcher C.F."/>
            <person name="Fukushima T."/>
            <person name="Furuno M."/>
            <person name="Futaki S."/>
            <person name="Gariboldi M."/>
            <person name="Georgii-Hemming P."/>
            <person name="Gingeras T.R."/>
            <person name="Gojobori T."/>
            <person name="Green R.E."/>
            <person name="Gustincich S."/>
            <person name="Harbers M."/>
            <person name="Hayashi Y."/>
            <person name="Hensch T.K."/>
            <person name="Hirokawa N."/>
            <person name="Hill D."/>
            <person name="Huminiecki L."/>
            <person name="Iacono M."/>
            <person name="Ikeo K."/>
            <person name="Iwama A."/>
            <person name="Ishikawa T."/>
            <person name="Jakt M."/>
            <person name="Kanapin A."/>
            <person name="Katoh M."/>
            <person name="Kawasawa Y."/>
            <person name="Kelso J."/>
            <person name="Kitamura H."/>
            <person name="Kitano H."/>
            <person name="Kollias G."/>
            <person name="Krishnan S.P."/>
            <person name="Kruger A."/>
            <person name="Kummerfeld S.K."/>
            <person name="Kurochkin I.V."/>
            <person name="Lareau L.F."/>
            <person name="Lazarevic D."/>
            <person name="Lipovich L."/>
            <person name="Liu J."/>
            <person name="Liuni S."/>
            <person name="McWilliam S."/>
            <person name="Madan Babu M."/>
            <person name="Madera M."/>
            <person name="Marchionni L."/>
            <person name="Matsuda H."/>
            <person name="Matsuzawa S."/>
            <person name="Miki H."/>
            <person name="Mignone F."/>
            <person name="Miyake S."/>
            <person name="Morris K."/>
            <person name="Mottagui-Tabar S."/>
            <person name="Mulder N."/>
            <person name="Nakano N."/>
            <person name="Nakauchi H."/>
            <person name="Ng P."/>
            <person name="Nilsson R."/>
            <person name="Nishiguchi S."/>
            <person name="Nishikawa S."/>
            <person name="Nori F."/>
            <person name="Ohara O."/>
            <person name="Okazaki Y."/>
            <person name="Orlando V."/>
            <person name="Pang K.C."/>
            <person name="Pavan W.J."/>
            <person name="Pavesi G."/>
            <person name="Pesole G."/>
            <person name="Petrovsky N."/>
            <person name="Piazza S."/>
            <person name="Reed J."/>
            <person name="Reid J.F."/>
            <person name="Ring B.Z."/>
            <person name="Ringwald M."/>
            <person name="Rost B."/>
            <person name="Ruan Y."/>
            <person name="Salzberg S.L."/>
            <person name="Sandelin A."/>
            <person name="Schneider C."/>
            <person name="Schoenbach C."/>
            <person name="Sekiguchi K."/>
            <person name="Semple C.A."/>
            <person name="Seno S."/>
            <person name="Sessa L."/>
            <person name="Sheng Y."/>
            <person name="Shibata Y."/>
            <person name="Shimada H."/>
            <person name="Shimada K."/>
            <person name="Silva D."/>
            <person name="Sinclair B."/>
            <person name="Sperling S."/>
            <person name="Stupka E."/>
            <person name="Sugiura K."/>
            <person name="Sultana R."/>
            <person name="Takenaka Y."/>
            <person name="Taki K."/>
            <person name="Tammoja K."/>
            <person name="Tan S.L."/>
            <person name="Tang S."/>
            <person name="Taylor M.S."/>
            <person name="Tegner J."/>
            <person name="Teichmann S.A."/>
            <person name="Ueda H.R."/>
            <person name="van Nimwegen E."/>
            <person name="Verardo R."/>
            <person name="Wei C.L."/>
            <person name="Yagi K."/>
            <person name="Yamanishi H."/>
            <person name="Zabarovsky E."/>
            <person name="Zhu S."/>
            <person name="Zimmer A."/>
            <person name="Hide W."/>
            <person name="Bult C."/>
            <person name="Grimmond S.M."/>
            <person name="Teasdale R.D."/>
            <person name="Liu E.T."/>
            <person name="Brusic V."/>
            <person name="Quackenbush J."/>
            <person name="Wahlestedt C."/>
            <person name="Mattick J.S."/>
            <person name="Hume D.A."/>
            <person name="Kai C."/>
            <person name="Sasaki D."/>
            <person name="Tomaru Y."/>
            <person name="Fukuda S."/>
            <person name="Kanamori-Katayama M."/>
            <person name="Suzuki M."/>
            <person name="Aoki J."/>
            <person name="Arakawa T."/>
            <person name="Iida J."/>
            <person name="Imamura K."/>
            <person name="Itoh M."/>
            <person name="Kato T."/>
            <person name="Kawaji H."/>
            <person name="Kawagashira N."/>
            <person name="Kawashima T."/>
            <person name="Kojima M."/>
            <person name="Kondo S."/>
            <person name="Konno H."/>
            <person name="Nakano K."/>
            <person name="Ninomiya N."/>
            <person name="Nishio T."/>
            <person name="Okada M."/>
            <person name="Plessy C."/>
            <person name="Shibata K."/>
            <person name="Shiraki T."/>
            <person name="Suzuki S."/>
            <person name="Tagami M."/>
            <person name="Waki K."/>
            <person name="Watahiki A."/>
            <person name="Okamura-Oho Y."/>
            <person name="Suzuki H."/>
            <person name="Kawai J."/>
            <person name="Hayashizaki Y."/>
        </authorList>
    </citation>
    <scope>NUCLEOTIDE SEQUENCE [LARGE SCALE MRNA]</scope>
    <source>
        <strain>C57BL/6J</strain>
        <tissue>Liver</tissue>
    </source>
</reference>
<reference key="3">
    <citation type="submission" date="2005-09" db="EMBL/GenBank/DDBJ databases">
        <authorList>
            <person name="Mural R.J."/>
            <person name="Adams M.D."/>
            <person name="Myers E.W."/>
            <person name="Smith H.O."/>
            <person name="Venter J.C."/>
        </authorList>
    </citation>
    <scope>NUCLEOTIDE SEQUENCE [LARGE SCALE GENOMIC DNA]</scope>
</reference>
<reference key="4">
    <citation type="journal article" date="2004" name="Genome Res.">
        <title>The status, quality, and expansion of the NIH full-length cDNA project: the Mammalian Gene Collection (MGC).</title>
        <authorList>
            <consortium name="The MGC Project Team"/>
        </authorList>
    </citation>
    <scope>NUCLEOTIDE SEQUENCE [LARGE SCALE MRNA]</scope>
    <source>
        <strain>FVB/N</strain>
        <tissue>Liver</tissue>
    </source>
</reference>
<reference key="5">
    <citation type="journal article" date="2007" name="J. Proteome Res.">
        <title>Enhanced analysis of the mouse plasma proteome using cysteine-containing tryptic glycopeptides.</title>
        <authorList>
            <person name="Bernhard O.K."/>
            <person name="Kapp E.A."/>
            <person name="Simpson R.J."/>
        </authorList>
    </citation>
    <scope>GLYCOSYLATION [LARGE SCALE ANALYSIS] AT ASN-275</scope>
    <source>
        <strain>C57BL/6J</strain>
        <tissue>Plasma</tissue>
    </source>
</reference>
<reference key="6">
    <citation type="journal article" date="2010" name="Cell">
        <title>A tissue-specific atlas of mouse protein phosphorylation and expression.</title>
        <authorList>
            <person name="Huttlin E.L."/>
            <person name="Jedrychowski M.P."/>
            <person name="Elias J.E."/>
            <person name="Goswami T."/>
            <person name="Rad R."/>
            <person name="Beausoleil S.A."/>
            <person name="Villen J."/>
            <person name="Haas W."/>
            <person name="Sowa M.E."/>
            <person name="Gygi S.P."/>
        </authorList>
    </citation>
    <scope>IDENTIFICATION BY MASS SPECTROMETRY [LARGE SCALE ANALYSIS]</scope>
    <source>
        <tissue>Brown adipose tissue</tissue>
        <tissue>Heart</tissue>
    </source>
</reference>